<name>RL14_ECOLC</name>
<organism>
    <name type="scientific">Escherichia coli (strain ATCC 8739 / DSM 1576 / NBRC 3972 / NCIMB 8545 / WDCM 00012 / Crooks)</name>
    <dbReference type="NCBI Taxonomy" id="481805"/>
    <lineage>
        <taxon>Bacteria</taxon>
        <taxon>Pseudomonadati</taxon>
        <taxon>Pseudomonadota</taxon>
        <taxon>Gammaproteobacteria</taxon>
        <taxon>Enterobacterales</taxon>
        <taxon>Enterobacteriaceae</taxon>
        <taxon>Escherichia</taxon>
    </lineage>
</organism>
<sequence length="123" mass="13541">MIQEQTMLNVADNSGARRVMCIKVLGGSHRRYAGVGDIIKITIKEAIPRGKVKKGDVLKAVVVRTKKGVRRPDGSVIRFDGNACVLLNNNSEQPIGTRIFGPVTRELRSEKFMKIISLAPEVL</sequence>
<feature type="chain" id="PRO_1000087127" description="Large ribosomal subunit protein uL14">
    <location>
        <begin position="1"/>
        <end position="123"/>
    </location>
</feature>
<accession>B1IPY9</accession>
<gene>
    <name evidence="1" type="primary">rplN</name>
    <name type="ordered locus">EcolC_0403</name>
</gene>
<proteinExistence type="inferred from homology"/>
<keyword id="KW-0687">Ribonucleoprotein</keyword>
<keyword id="KW-0689">Ribosomal protein</keyword>
<keyword id="KW-0694">RNA-binding</keyword>
<keyword id="KW-0699">rRNA-binding</keyword>
<comment type="function">
    <text evidence="1">Binds to 23S rRNA. Forms part of two intersubunit bridges in the 70S ribosome.</text>
</comment>
<comment type="subunit">
    <text evidence="1">Part of the 50S ribosomal subunit. Forms a cluster with proteins L3 and L19. In the 70S ribosome, L14 and L19 interact and together make contacts with the 16S rRNA in bridges B5 and B8.</text>
</comment>
<comment type="similarity">
    <text evidence="1">Belongs to the universal ribosomal protein uL14 family.</text>
</comment>
<protein>
    <recommendedName>
        <fullName evidence="1">Large ribosomal subunit protein uL14</fullName>
    </recommendedName>
    <alternativeName>
        <fullName evidence="2">50S ribosomal protein L14</fullName>
    </alternativeName>
</protein>
<dbReference type="EMBL" id="CP000946">
    <property type="protein sequence ID" value="ACA76081.1"/>
    <property type="molecule type" value="Genomic_DNA"/>
</dbReference>
<dbReference type="RefSeq" id="WP_000613955.1">
    <property type="nucleotide sequence ID" value="NZ_MTFT01000014.1"/>
</dbReference>
<dbReference type="SMR" id="B1IPY9"/>
<dbReference type="GeneID" id="93778677"/>
<dbReference type="KEGG" id="ecl:EcolC_0403"/>
<dbReference type="HOGENOM" id="CLU_095071_2_1_6"/>
<dbReference type="GO" id="GO:0022625">
    <property type="term" value="C:cytosolic large ribosomal subunit"/>
    <property type="evidence" value="ECO:0007669"/>
    <property type="project" value="TreeGrafter"/>
</dbReference>
<dbReference type="GO" id="GO:0070180">
    <property type="term" value="F:large ribosomal subunit rRNA binding"/>
    <property type="evidence" value="ECO:0007669"/>
    <property type="project" value="TreeGrafter"/>
</dbReference>
<dbReference type="GO" id="GO:0003735">
    <property type="term" value="F:structural constituent of ribosome"/>
    <property type="evidence" value="ECO:0007669"/>
    <property type="project" value="InterPro"/>
</dbReference>
<dbReference type="GO" id="GO:0006412">
    <property type="term" value="P:translation"/>
    <property type="evidence" value="ECO:0007669"/>
    <property type="project" value="UniProtKB-UniRule"/>
</dbReference>
<dbReference type="CDD" id="cd00337">
    <property type="entry name" value="Ribosomal_uL14"/>
    <property type="match status" value="1"/>
</dbReference>
<dbReference type="FunFam" id="2.40.150.20:FF:000001">
    <property type="entry name" value="50S ribosomal protein L14"/>
    <property type="match status" value="1"/>
</dbReference>
<dbReference type="Gene3D" id="2.40.150.20">
    <property type="entry name" value="Ribosomal protein L14"/>
    <property type="match status" value="1"/>
</dbReference>
<dbReference type="HAMAP" id="MF_01367">
    <property type="entry name" value="Ribosomal_uL14"/>
    <property type="match status" value="1"/>
</dbReference>
<dbReference type="InterPro" id="IPR000218">
    <property type="entry name" value="Ribosomal_uL14"/>
</dbReference>
<dbReference type="InterPro" id="IPR005745">
    <property type="entry name" value="Ribosomal_uL14_bac-type"/>
</dbReference>
<dbReference type="InterPro" id="IPR019972">
    <property type="entry name" value="Ribosomal_uL14_CS"/>
</dbReference>
<dbReference type="InterPro" id="IPR036853">
    <property type="entry name" value="Ribosomal_uL14_sf"/>
</dbReference>
<dbReference type="NCBIfam" id="TIGR01067">
    <property type="entry name" value="rplN_bact"/>
    <property type="match status" value="1"/>
</dbReference>
<dbReference type="PANTHER" id="PTHR11761">
    <property type="entry name" value="50S/60S RIBOSOMAL PROTEIN L14/L23"/>
    <property type="match status" value="1"/>
</dbReference>
<dbReference type="PANTHER" id="PTHR11761:SF3">
    <property type="entry name" value="LARGE RIBOSOMAL SUBUNIT PROTEIN UL14M"/>
    <property type="match status" value="1"/>
</dbReference>
<dbReference type="Pfam" id="PF00238">
    <property type="entry name" value="Ribosomal_L14"/>
    <property type="match status" value="1"/>
</dbReference>
<dbReference type="SMART" id="SM01374">
    <property type="entry name" value="Ribosomal_L14"/>
    <property type="match status" value="1"/>
</dbReference>
<dbReference type="SUPFAM" id="SSF50193">
    <property type="entry name" value="Ribosomal protein L14"/>
    <property type="match status" value="1"/>
</dbReference>
<dbReference type="PROSITE" id="PS00049">
    <property type="entry name" value="RIBOSOMAL_L14"/>
    <property type="match status" value="1"/>
</dbReference>
<evidence type="ECO:0000255" key="1">
    <source>
        <dbReference type="HAMAP-Rule" id="MF_01367"/>
    </source>
</evidence>
<evidence type="ECO:0000305" key="2"/>
<reference key="1">
    <citation type="submission" date="2008-02" db="EMBL/GenBank/DDBJ databases">
        <title>Complete sequence of Escherichia coli C str. ATCC 8739.</title>
        <authorList>
            <person name="Copeland A."/>
            <person name="Lucas S."/>
            <person name="Lapidus A."/>
            <person name="Glavina del Rio T."/>
            <person name="Dalin E."/>
            <person name="Tice H."/>
            <person name="Bruce D."/>
            <person name="Goodwin L."/>
            <person name="Pitluck S."/>
            <person name="Kiss H."/>
            <person name="Brettin T."/>
            <person name="Detter J.C."/>
            <person name="Han C."/>
            <person name="Kuske C.R."/>
            <person name="Schmutz J."/>
            <person name="Larimer F."/>
            <person name="Land M."/>
            <person name="Hauser L."/>
            <person name="Kyrpides N."/>
            <person name="Mikhailova N."/>
            <person name="Ingram L."/>
            <person name="Richardson P."/>
        </authorList>
    </citation>
    <scope>NUCLEOTIDE SEQUENCE [LARGE SCALE GENOMIC DNA]</scope>
    <source>
        <strain>ATCC 8739 / DSM 1576 / NBRC 3972 / NCIMB 8545 / WDCM 00012 / Crooks</strain>
    </source>
</reference>